<reference key="1">
    <citation type="journal article" date="1998" name="Nature">
        <title>The complete genome of the hyperthermophilic bacterium Aquifex aeolicus.</title>
        <authorList>
            <person name="Deckert G."/>
            <person name="Warren P.V."/>
            <person name="Gaasterland T."/>
            <person name="Young W.G."/>
            <person name="Lenox A.L."/>
            <person name="Graham D.E."/>
            <person name="Overbeek R."/>
            <person name="Snead M.A."/>
            <person name="Keller M."/>
            <person name="Aujay M."/>
            <person name="Huber R."/>
            <person name="Feldman R.A."/>
            <person name="Short J.M."/>
            <person name="Olsen G.J."/>
            <person name="Swanson R.V."/>
        </authorList>
    </citation>
    <scope>NUCLEOTIDE SEQUENCE [LARGE SCALE GENOMIC DNA]</scope>
    <source>
        <strain>VF5</strain>
    </source>
</reference>
<feature type="chain" id="PRO_0000138850" description="Protease HtpX homolog">
    <location>
        <begin position="1"/>
        <end position="302"/>
    </location>
</feature>
<feature type="transmembrane region" description="Helical" evidence="1">
    <location>
        <begin position="27"/>
        <end position="47"/>
    </location>
</feature>
<feature type="transmembrane region" description="Helical" evidence="1">
    <location>
        <begin position="151"/>
        <end position="171"/>
    </location>
</feature>
<feature type="transmembrane region" description="Helical" evidence="1">
    <location>
        <begin position="195"/>
        <end position="215"/>
    </location>
</feature>
<feature type="active site" evidence="1">
    <location>
        <position position="142"/>
    </location>
</feature>
<feature type="binding site" evidence="1">
    <location>
        <position position="141"/>
    </location>
    <ligand>
        <name>Zn(2+)</name>
        <dbReference type="ChEBI" id="CHEBI:29105"/>
        <note>catalytic</note>
    </ligand>
</feature>
<feature type="binding site" evidence="1">
    <location>
        <position position="145"/>
    </location>
    <ligand>
        <name>Zn(2+)</name>
        <dbReference type="ChEBI" id="CHEBI:29105"/>
        <note>catalytic</note>
    </ligand>
</feature>
<feature type="binding site" evidence="1">
    <location>
        <position position="220"/>
    </location>
    <ligand>
        <name>Zn(2+)</name>
        <dbReference type="ChEBI" id="CHEBI:29105"/>
        <note>catalytic</note>
    </ligand>
</feature>
<name>HTPX_AQUAE</name>
<protein>
    <recommendedName>
        <fullName evidence="1">Protease HtpX homolog</fullName>
        <ecNumber evidence="1">3.4.24.-</ecNumber>
    </recommendedName>
</protein>
<evidence type="ECO:0000255" key="1">
    <source>
        <dbReference type="HAMAP-Rule" id="MF_00188"/>
    </source>
</evidence>
<accession>O67798</accession>
<sequence length="302" mass="33031">MSEREFLRFGDELDVKNCNTSRSFNGLLMAIGGIIGGTAGMLIALIIAGFMNFMSYWFSDKIVLSMYGAREIPYEEAPWLHQIVEELARRANMPKPKIYLVPMEQPNAFATGRGPGHAAVAVTRGILEILDQEELKGVLAHELAHIKNRDVLVATIAATIAGAIGFLANMAQWALFFGGLNRNEEEEGGGFAEMIGAILMIIIVPIIATIVQLAISRSREYFADETGAKICGCPVALARALKKIEEYVMQVPANVNPGTAHLFIENPLKGGGIMELLSTHPSTEKRIQRLCELARKMGQECI</sequence>
<gene>
    <name evidence="1" type="primary">htpX</name>
    <name type="ordered locus">aq_1991</name>
</gene>
<organism>
    <name type="scientific">Aquifex aeolicus (strain VF5)</name>
    <dbReference type="NCBI Taxonomy" id="224324"/>
    <lineage>
        <taxon>Bacteria</taxon>
        <taxon>Pseudomonadati</taxon>
        <taxon>Aquificota</taxon>
        <taxon>Aquificia</taxon>
        <taxon>Aquificales</taxon>
        <taxon>Aquificaceae</taxon>
        <taxon>Aquifex</taxon>
    </lineage>
</organism>
<dbReference type="EC" id="3.4.24.-" evidence="1"/>
<dbReference type="EMBL" id="AE000657">
    <property type="protein sequence ID" value="AAC07747.1"/>
    <property type="molecule type" value="Genomic_DNA"/>
</dbReference>
<dbReference type="PIR" id="B70471">
    <property type="entry name" value="B70471"/>
</dbReference>
<dbReference type="RefSeq" id="NP_214367.1">
    <property type="nucleotide sequence ID" value="NC_000918.1"/>
</dbReference>
<dbReference type="FunCoup" id="O67798">
    <property type="interactions" value="195"/>
</dbReference>
<dbReference type="STRING" id="224324.aq_1991"/>
<dbReference type="EnsemblBacteria" id="AAC07747">
    <property type="protein sequence ID" value="AAC07747"/>
    <property type="gene ID" value="aq_1991"/>
</dbReference>
<dbReference type="KEGG" id="aae:aq_1991"/>
<dbReference type="PATRIC" id="fig|224324.8.peg.1540"/>
<dbReference type="eggNOG" id="COG0501">
    <property type="taxonomic scope" value="Bacteria"/>
</dbReference>
<dbReference type="HOGENOM" id="CLU_042266_3_0_0"/>
<dbReference type="InParanoid" id="O67798"/>
<dbReference type="OrthoDB" id="15218at2"/>
<dbReference type="Proteomes" id="UP000000798">
    <property type="component" value="Chromosome"/>
</dbReference>
<dbReference type="GO" id="GO:0005886">
    <property type="term" value="C:plasma membrane"/>
    <property type="evidence" value="ECO:0007669"/>
    <property type="project" value="UniProtKB-SubCell"/>
</dbReference>
<dbReference type="GO" id="GO:0004222">
    <property type="term" value="F:metalloendopeptidase activity"/>
    <property type="evidence" value="ECO:0007669"/>
    <property type="project" value="UniProtKB-UniRule"/>
</dbReference>
<dbReference type="GO" id="GO:0008270">
    <property type="term" value="F:zinc ion binding"/>
    <property type="evidence" value="ECO:0007669"/>
    <property type="project" value="UniProtKB-UniRule"/>
</dbReference>
<dbReference type="GO" id="GO:0006508">
    <property type="term" value="P:proteolysis"/>
    <property type="evidence" value="ECO:0007669"/>
    <property type="project" value="UniProtKB-KW"/>
</dbReference>
<dbReference type="CDD" id="cd07336">
    <property type="entry name" value="M48B_HtpX_like"/>
    <property type="match status" value="1"/>
</dbReference>
<dbReference type="Gene3D" id="3.30.2010.10">
    <property type="entry name" value="Metalloproteases ('zincins'), catalytic domain"/>
    <property type="match status" value="1"/>
</dbReference>
<dbReference type="HAMAP" id="MF_00188">
    <property type="entry name" value="Pept_M48_protease_HtpX"/>
    <property type="match status" value="1"/>
</dbReference>
<dbReference type="InterPro" id="IPR050083">
    <property type="entry name" value="HtpX_protease"/>
</dbReference>
<dbReference type="InterPro" id="IPR022919">
    <property type="entry name" value="Pept_M48_protease_HtpX"/>
</dbReference>
<dbReference type="InterPro" id="IPR001915">
    <property type="entry name" value="Peptidase_M48"/>
</dbReference>
<dbReference type="PANTHER" id="PTHR43221">
    <property type="entry name" value="PROTEASE HTPX"/>
    <property type="match status" value="1"/>
</dbReference>
<dbReference type="PANTHER" id="PTHR43221:SF1">
    <property type="entry name" value="PROTEASE HTPX"/>
    <property type="match status" value="1"/>
</dbReference>
<dbReference type="Pfam" id="PF01435">
    <property type="entry name" value="Peptidase_M48"/>
    <property type="match status" value="1"/>
</dbReference>
<keyword id="KW-0997">Cell inner membrane</keyword>
<keyword id="KW-1003">Cell membrane</keyword>
<keyword id="KW-0378">Hydrolase</keyword>
<keyword id="KW-0472">Membrane</keyword>
<keyword id="KW-0479">Metal-binding</keyword>
<keyword id="KW-0482">Metalloprotease</keyword>
<keyword id="KW-0645">Protease</keyword>
<keyword id="KW-1185">Reference proteome</keyword>
<keyword id="KW-0812">Transmembrane</keyword>
<keyword id="KW-1133">Transmembrane helix</keyword>
<keyword id="KW-0862">Zinc</keyword>
<proteinExistence type="inferred from homology"/>
<comment type="cofactor">
    <cofactor evidence="1">
        <name>Zn(2+)</name>
        <dbReference type="ChEBI" id="CHEBI:29105"/>
    </cofactor>
    <text evidence="1">Binds 1 zinc ion per subunit.</text>
</comment>
<comment type="subcellular location">
    <subcellularLocation>
        <location evidence="1">Cell inner membrane</location>
        <topology evidence="1">Multi-pass membrane protein</topology>
    </subcellularLocation>
</comment>
<comment type="similarity">
    <text evidence="1">Belongs to the peptidase M48B family.</text>
</comment>